<accession>P38269</accession>
<dbReference type="EMBL" id="X78993">
    <property type="status" value="NOT_ANNOTATED_CDS"/>
    <property type="molecule type" value="Genomic_DNA"/>
</dbReference>
<dbReference type="EMBL" id="Z35992">
    <property type="protein sequence ID" value="CAA85081.1"/>
    <property type="molecule type" value="Genomic_DNA"/>
</dbReference>
<dbReference type="PIR" id="S45992">
    <property type="entry name" value="S45992"/>
</dbReference>
<dbReference type="SMR" id="P38269"/>
<dbReference type="DIP" id="DIP-4769N"/>
<dbReference type="iPTMnet" id="P38269"/>
<dbReference type="PaxDb" id="4932-YBR124W"/>
<dbReference type="EnsemblFungi" id="YBR124W_mRNA">
    <property type="protein sequence ID" value="YBR124W"/>
    <property type="gene ID" value="YBR124W"/>
</dbReference>
<dbReference type="AGR" id="SGD:S000000328"/>
<dbReference type="SGD" id="S000000328">
    <property type="gene designation" value="YBR124W"/>
</dbReference>
<dbReference type="HOGENOM" id="CLU_2062804_0_0_1"/>
<dbReference type="GO" id="GO:0016020">
    <property type="term" value="C:membrane"/>
    <property type="evidence" value="ECO:0007669"/>
    <property type="project" value="UniProtKB-SubCell"/>
</dbReference>
<keyword id="KW-0472">Membrane</keyword>
<keyword id="KW-0812">Transmembrane</keyword>
<keyword id="KW-1133">Transmembrane helix</keyword>
<protein>
    <recommendedName>
        <fullName>Putative uncharacterized protein YBR124W</fullName>
    </recommendedName>
</protein>
<reference key="1">
    <citation type="journal article" date="1994" name="Yeast">
        <title>Analysis of a 70 kb region on the right arm of yeast chromosome II.</title>
        <authorList>
            <person name="Mannhaupt G."/>
            <person name="Stucka R."/>
            <person name="Ehnle S."/>
            <person name="Vetter I."/>
            <person name="Feldmann H."/>
        </authorList>
    </citation>
    <scope>NUCLEOTIDE SEQUENCE [GENOMIC DNA]</scope>
    <source>
        <strain>ATCC 204508 / S288c</strain>
    </source>
</reference>
<reference key="2">
    <citation type="journal article" date="1994" name="EMBO J.">
        <title>Complete DNA sequence of yeast chromosome II.</title>
        <authorList>
            <person name="Feldmann H."/>
            <person name="Aigle M."/>
            <person name="Aljinovic G."/>
            <person name="Andre B."/>
            <person name="Baclet M.C."/>
            <person name="Barthe C."/>
            <person name="Baur A."/>
            <person name="Becam A.-M."/>
            <person name="Biteau N."/>
            <person name="Boles E."/>
            <person name="Brandt T."/>
            <person name="Brendel M."/>
            <person name="Brueckner M."/>
            <person name="Bussereau F."/>
            <person name="Christiansen C."/>
            <person name="Contreras R."/>
            <person name="Crouzet M."/>
            <person name="Cziepluch C."/>
            <person name="Demolis N."/>
            <person name="Delaveau T."/>
            <person name="Doignon F."/>
            <person name="Domdey H."/>
            <person name="Duesterhus S."/>
            <person name="Dubois E."/>
            <person name="Dujon B."/>
            <person name="El Bakkoury M."/>
            <person name="Entian K.-D."/>
            <person name="Feuermann M."/>
            <person name="Fiers W."/>
            <person name="Fobo G.M."/>
            <person name="Fritz C."/>
            <person name="Gassenhuber J."/>
            <person name="Glansdorff N."/>
            <person name="Goffeau A."/>
            <person name="Grivell L.A."/>
            <person name="de Haan M."/>
            <person name="Hein C."/>
            <person name="Herbert C.J."/>
            <person name="Hollenberg C.P."/>
            <person name="Holmstroem K."/>
            <person name="Jacq C."/>
            <person name="Jacquet M."/>
            <person name="Jauniaux J.-C."/>
            <person name="Jonniaux J.-L."/>
            <person name="Kallesoee T."/>
            <person name="Kiesau P."/>
            <person name="Kirchrath L."/>
            <person name="Koetter P."/>
            <person name="Korol S."/>
            <person name="Liebl S."/>
            <person name="Logghe M."/>
            <person name="Lohan A.J.E."/>
            <person name="Louis E.J."/>
            <person name="Li Z.Y."/>
            <person name="Maat M.J."/>
            <person name="Mallet L."/>
            <person name="Mannhaupt G."/>
            <person name="Messenguy F."/>
            <person name="Miosga T."/>
            <person name="Molemans F."/>
            <person name="Mueller S."/>
            <person name="Nasr F."/>
            <person name="Obermaier B."/>
            <person name="Perea J."/>
            <person name="Pierard A."/>
            <person name="Piravandi E."/>
            <person name="Pohl F.M."/>
            <person name="Pohl T.M."/>
            <person name="Potier S."/>
            <person name="Proft M."/>
            <person name="Purnelle B."/>
            <person name="Ramezani Rad M."/>
            <person name="Rieger M."/>
            <person name="Rose M."/>
            <person name="Schaaff-Gerstenschlaeger I."/>
            <person name="Scherens B."/>
            <person name="Schwarzlose C."/>
            <person name="Skala J."/>
            <person name="Slonimski P.P."/>
            <person name="Smits P.H.M."/>
            <person name="Souciet J.-L."/>
            <person name="Steensma H.Y."/>
            <person name="Stucka R."/>
            <person name="Urrestarazu L.A."/>
            <person name="van der Aart Q.J.M."/>
            <person name="Van Dyck L."/>
            <person name="Vassarotti A."/>
            <person name="Vetter I."/>
            <person name="Vierendeels F."/>
            <person name="Vissers S."/>
            <person name="Wagner G."/>
            <person name="de Wergifosse P."/>
            <person name="Wolfe K.H."/>
            <person name="Zagulski M."/>
            <person name="Zimmermann F.K."/>
            <person name="Mewes H.-W."/>
            <person name="Kleine K."/>
        </authorList>
    </citation>
    <scope>NUCLEOTIDE SEQUENCE [LARGE SCALE GENOMIC DNA]</scope>
    <source>
        <strain>ATCC 204508 / S288c</strain>
    </source>
</reference>
<reference key="3">
    <citation type="journal article" date="2014" name="G3 (Bethesda)">
        <title>The reference genome sequence of Saccharomyces cerevisiae: Then and now.</title>
        <authorList>
            <person name="Engel S.R."/>
            <person name="Dietrich F.S."/>
            <person name="Fisk D.G."/>
            <person name="Binkley G."/>
            <person name="Balakrishnan R."/>
            <person name="Costanzo M.C."/>
            <person name="Dwight S.S."/>
            <person name="Hitz B.C."/>
            <person name="Karra K."/>
            <person name="Nash R.S."/>
            <person name="Weng S."/>
            <person name="Wong E.D."/>
            <person name="Lloyd P."/>
            <person name="Skrzypek M.S."/>
            <person name="Miyasato S.R."/>
            <person name="Simison M."/>
            <person name="Cherry J.M."/>
        </authorList>
    </citation>
    <scope>GENOME REANNOTATION</scope>
    <source>
        <strain>ATCC 204508 / S288c</strain>
    </source>
</reference>
<proteinExistence type="uncertain"/>
<organism>
    <name type="scientific">Saccharomyces cerevisiae (strain ATCC 204508 / S288c)</name>
    <name type="common">Baker's yeast</name>
    <dbReference type="NCBI Taxonomy" id="559292"/>
    <lineage>
        <taxon>Eukaryota</taxon>
        <taxon>Fungi</taxon>
        <taxon>Dikarya</taxon>
        <taxon>Ascomycota</taxon>
        <taxon>Saccharomycotina</taxon>
        <taxon>Saccharomycetes</taxon>
        <taxon>Saccharomycetales</taxon>
        <taxon>Saccharomycetaceae</taxon>
        <taxon>Saccharomyces</taxon>
    </lineage>
</organism>
<comment type="subcellular location">
    <subcellularLocation>
        <location evidence="2">Membrane</location>
        <topology evidence="2">Single-pass membrane protein</topology>
    </subcellularLocation>
</comment>
<comment type="miscellaneous">
    <text evidence="2">Partially overlaps YBR123C.</text>
</comment>
<comment type="caution">
    <text evidence="3">Product of a dubious gene prediction unlikely to encode a functional protein. Because of that it is not part of the S.cerevisiae S288c complete/reference proteome set.</text>
</comment>
<feature type="chain" id="PRO_0000202489" description="Putative uncharacterized protein YBR124W">
    <location>
        <begin position="1"/>
        <end position="119"/>
    </location>
</feature>
<feature type="transmembrane region" description="Helical" evidence="1">
    <location>
        <begin position="80"/>
        <end position="104"/>
    </location>
</feature>
<evidence type="ECO:0000255" key="1"/>
<evidence type="ECO:0000305" key="2"/>
<evidence type="ECO:0000305" key="3">
    <source>
    </source>
</evidence>
<sequence>MPPHIFIAFCILECFVETLSGNSKLGILGRSNVNSSAINGGAWSALESGIDESVARGSSTGIFTIWKIFSLLKAIEINYVFPLVYLFCVVFQFLSLGCYLSIFFRKTKSEEAKKRTSLY</sequence>
<name>YBX4_YEAST</name>
<gene>
    <name type="ordered locus">YBR124W</name>
    <name type="ORF">YBR0920B</name>
</gene>